<organism>
    <name type="scientific">Buchnera aphidicola subsp. Baizongia pistaciae (strain Bp)</name>
    <dbReference type="NCBI Taxonomy" id="224915"/>
    <lineage>
        <taxon>Bacteria</taxon>
        <taxon>Pseudomonadati</taxon>
        <taxon>Pseudomonadota</taxon>
        <taxon>Gammaproteobacteria</taxon>
        <taxon>Enterobacterales</taxon>
        <taxon>Erwiniaceae</taxon>
        <taxon>Buchnera</taxon>
    </lineage>
</organism>
<name>FTSH_BUCBP</name>
<gene>
    <name evidence="1" type="primary">ftsH</name>
    <name type="synonym">hflB</name>
    <name type="ordered locus">bbp_345</name>
</gene>
<dbReference type="EC" id="3.4.24.-" evidence="1"/>
<dbReference type="EMBL" id="AE016826">
    <property type="protein sequence ID" value="AAO27064.1"/>
    <property type="molecule type" value="Genomic_DNA"/>
</dbReference>
<dbReference type="RefSeq" id="WP_011091465.1">
    <property type="nucleotide sequence ID" value="NC_004545.1"/>
</dbReference>
<dbReference type="SMR" id="Q89AF2"/>
<dbReference type="STRING" id="224915.bbp_345"/>
<dbReference type="MEROPS" id="M41.001"/>
<dbReference type="KEGG" id="bab:bbp_345"/>
<dbReference type="eggNOG" id="COG0465">
    <property type="taxonomic scope" value="Bacteria"/>
</dbReference>
<dbReference type="HOGENOM" id="CLU_000688_16_2_6"/>
<dbReference type="OrthoDB" id="9809379at2"/>
<dbReference type="Proteomes" id="UP000000601">
    <property type="component" value="Chromosome"/>
</dbReference>
<dbReference type="GO" id="GO:0005886">
    <property type="term" value="C:plasma membrane"/>
    <property type="evidence" value="ECO:0007669"/>
    <property type="project" value="UniProtKB-SubCell"/>
</dbReference>
<dbReference type="GO" id="GO:0005524">
    <property type="term" value="F:ATP binding"/>
    <property type="evidence" value="ECO:0007669"/>
    <property type="project" value="UniProtKB-UniRule"/>
</dbReference>
<dbReference type="GO" id="GO:0016887">
    <property type="term" value="F:ATP hydrolysis activity"/>
    <property type="evidence" value="ECO:0007669"/>
    <property type="project" value="UniProtKB-UniRule"/>
</dbReference>
<dbReference type="GO" id="GO:0004176">
    <property type="term" value="F:ATP-dependent peptidase activity"/>
    <property type="evidence" value="ECO:0007669"/>
    <property type="project" value="InterPro"/>
</dbReference>
<dbReference type="GO" id="GO:0004222">
    <property type="term" value="F:metalloendopeptidase activity"/>
    <property type="evidence" value="ECO:0007669"/>
    <property type="project" value="InterPro"/>
</dbReference>
<dbReference type="GO" id="GO:0008270">
    <property type="term" value="F:zinc ion binding"/>
    <property type="evidence" value="ECO:0007669"/>
    <property type="project" value="UniProtKB-UniRule"/>
</dbReference>
<dbReference type="GO" id="GO:0030163">
    <property type="term" value="P:protein catabolic process"/>
    <property type="evidence" value="ECO:0007669"/>
    <property type="project" value="UniProtKB-UniRule"/>
</dbReference>
<dbReference type="GO" id="GO:0006508">
    <property type="term" value="P:proteolysis"/>
    <property type="evidence" value="ECO:0007669"/>
    <property type="project" value="UniProtKB-KW"/>
</dbReference>
<dbReference type="CDD" id="cd19501">
    <property type="entry name" value="RecA-like_FtsH"/>
    <property type="match status" value="1"/>
</dbReference>
<dbReference type="FunFam" id="1.10.8.60:FF:000001">
    <property type="entry name" value="ATP-dependent zinc metalloprotease FtsH"/>
    <property type="match status" value="1"/>
</dbReference>
<dbReference type="FunFam" id="1.20.58.760:FF:000001">
    <property type="entry name" value="ATP-dependent zinc metalloprotease FtsH"/>
    <property type="match status" value="1"/>
</dbReference>
<dbReference type="FunFam" id="3.40.50.300:FF:000001">
    <property type="entry name" value="ATP-dependent zinc metalloprotease FtsH"/>
    <property type="match status" value="1"/>
</dbReference>
<dbReference type="Gene3D" id="1.10.8.60">
    <property type="match status" value="1"/>
</dbReference>
<dbReference type="Gene3D" id="3.30.720.210">
    <property type="match status" value="1"/>
</dbReference>
<dbReference type="Gene3D" id="3.40.50.300">
    <property type="entry name" value="P-loop containing nucleotide triphosphate hydrolases"/>
    <property type="match status" value="1"/>
</dbReference>
<dbReference type="Gene3D" id="1.20.58.760">
    <property type="entry name" value="Peptidase M41"/>
    <property type="match status" value="1"/>
</dbReference>
<dbReference type="HAMAP" id="MF_01458">
    <property type="entry name" value="FtsH"/>
    <property type="match status" value="1"/>
</dbReference>
<dbReference type="InterPro" id="IPR003593">
    <property type="entry name" value="AAA+_ATPase"/>
</dbReference>
<dbReference type="InterPro" id="IPR041569">
    <property type="entry name" value="AAA_lid_3"/>
</dbReference>
<dbReference type="InterPro" id="IPR003959">
    <property type="entry name" value="ATPase_AAA_core"/>
</dbReference>
<dbReference type="InterPro" id="IPR003960">
    <property type="entry name" value="ATPase_AAA_CS"/>
</dbReference>
<dbReference type="InterPro" id="IPR005936">
    <property type="entry name" value="FtsH"/>
</dbReference>
<dbReference type="InterPro" id="IPR027417">
    <property type="entry name" value="P-loop_NTPase"/>
</dbReference>
<dbReference type="InterPro" id="IPR011546">
    <property type="entry name" value="Pept_M41_FtsH_extracell"/>
</dbReference>
<dbReference type="InterPro" id="IPR000642">
    <property type="entry name" value="Peptidase_M41"/>
</dbReference>
<dbReference type="InterPro" id="IPR037219">
    <property type="entry name" value="Peptidase_M41-like"/>
</dbReference>
<dbReference type="NCBIfam" id="TIGR01241">
    <property type="entry name" value="FtsH_fam"/>
    <property type="match status" value="1"/>
</dbReference>
<dbReference type="NCBIfam" id="NF008004">
    <property type="entry name" value="PRK10733.1"/>
    <property type="match status" value="1"/>
</dbReference>
<dbReference type="PANTHER" id="PTHR23076:SF97">
    <property type="entry name" value="ATP-DEPENDENT ZINC METALLOPROTEASE YME1L1"/>
    <property type="match status" value="1"/>
</dbReference>
<dbReference type="PANTHER" id="PTHR23076">
    <property type="entry name" value="METALLOPROTEASE M41 FTSH"/>
    <property type="match status" value="1"/>
</dbReference>
<dbReference type="Pfam" id="PF00004">
    <property type="entry name" value="AAA"/>
    <property type="match status" value="1"/>
</dbReference>
<dbReference type="Pfam" id="PF17862">
    <property type="entry name" value="AAA_lid_3"/>
    <property type="match status" value="1"/>
</dbReference>
<dbReference type="Pfam" id="PF06480">
    <property type="entry name" value="FtsH_ext"/>
    <property type="match status" value="1"/>
</dbReference>
<dbReference type="Pfam" id="PF01434">
    <property type="entry name" value="Peptidase_M41"/>
    <property type="match status" value="1"/>
</dbReference>
<dbReference type="SMART" id="SM00382">
    <property type="entry name" value="AAA"/>
    <property type="match status" value="1"/>
</dbReference>
<dbReference type="SUPFAM" id="SSF140990">
    <property type="entry name" value="FtsH protease domain-like"/>
    <property type="match status" value="1"/>
</dbReference>
<dbReference type="SUPFAM" id="SSF52540">
    <property type="entry name" value="P-loop containing nucleoside triphosphate hydrolases"/>
    <property type="match status" value="1"/>
</dbReference>
<dbReference type="PROSITE" id="PS00674">
    <property type="entry name" value="AAA"/>
    <property type="match status" value="1"/>
</dbReference>
<keyword id="KW-0067">ATP-binding</keyword>
<keyword id="KW-1003">Cell membrane</keyword>
<keyword id="KW-0378">Hydrolase</keyword>
<keyword id="KW-0472">Membrane</keyword>
<keyword id="KW-0479">Metal-binding</keyword>
<keyword id="KW-0482">Metalloprotease</keyword>
<keyword id="KW-0547">Nucleotide-binding</keyword>
<keyword id="KW-0645">Protease</keyword>
<keyword id="KW-1185">Reference proteome</keyword>
<keyword id="KW-0812">Transmembrane</keyword>
<keyword id="KW-1133">Transmembrane helix</keyword>
<keyword id="KW-0862">Zinc</keyword>
<reference key="1">
    <citation type="journal article" date="2003" name="Proc. Natl. Acad. Sci. U.S.A.">
        <title>Reductive genome evolution in Buchnera aphidicola.</title>
        <authorList>
            <person name="van Ham R.C.H.J."/>
            <person name="Kamerbeek J."/>
            <person name="Palacios C."/>
            <person name="Rausell C."/>
            <person name="Abascal F."/>
            <person name="Bastolla U."/>
            <person name="Fernandez J.M."/>
            <person name="Jimenez L."/>
            <person name="Postigo M."/>
            <person name="Silva F.J."/>
            <person name="Tamames J."/>
            <person name="Viguera E."/>
            <person name="Latorre A."/>
            <person name="Valencia A."/>
            <person name="Moran F."/>
            <person name="Moya A."/>
        </authorList>
    </citation>
    <scope>NUCLEOTIDE SEQUENCE [LARGE SCALE GENOMIC DNA]</scope>
    <source>
        <strain>Bp</strain>
    </source>
</reference>
<protein>
    <recommendedName>
        <fullName evidence="1">ATP-dependent zinc metalloprotease FtsH</fullName>
        <ecNumber evidence="1">3.4.24.-</ecNumber>
    </recommendedName>
</protein>
<accession>Q89AF2</accession>
<evidence type="ECO:0000255" key="1">
    <source>
        <dbReference type="HAMAP-Rule" id="MF_01458"/>
    </source>
</evidence>
<feature type="chain" id="PRO_0000084630" description="ATP-dependent zinc metalloprotease FtsH">
    <location>
        <begin position="1"/>
        <end position="610"/>
    </location>
</feature>
<feature type="topological domain" description="Cytoplasmic" evidence="1">
    <location>
        <begin position="1"/>
        <end position="3"/>
    </location>
</feature>
<feature type="transmembrane region" description="Helical" evidence="1">
    <location>
        <begin position="4"/>
        <end position="24"/>
    </location>
</feature>
<feature type="topological domain" description="Extracellular" evidence="1">
    <location>
        <begin position="25"/>
        <end position="97"/>
    </location>
</feature>
<feature type="transmembrane region" description="Helical" evidence="1">
    <location>
        <begin position="98"/>
        <end position="118"/>
    </location>
</feature>
<feature type="topological domain" description="Cytoplasmic" evidence="1">
    <location>
        <begin position="119"/>
        <end position="610"/>
    </location>
</feature>
<feature type="active site" evidence="1">
    <location>
        <position position="415"/>
    </location>
</feature>
<feature type="binding site" evidence="1">
    <location>
        <begin position="192"/>
        <end position="199"/>
    </location>
    <ligand>
        <name>ATP</name>
        <dbReference type="ChEBI" id="CHEBI:30616"/>
    </ligand>
</feature>
<feature type="binding site" evidence="1">
    <location>
        <position position="414"/>
    </location>
    <ligand>
        <name>Zn(2+)</name>
        <dbReference type="ChEBI" id="CHEBI:29105"/>
        <note>catalytic</note>
    </ligand>
</feature>
<feature type="binding site" evidence="1">
    <location>
        <position position="418"/>
    </location>
    <ligand>
        <name>Zn(2+)</name>
        <dbReference type="ChEBI" id="CHEBI:29105"/>
        <note>catalytic</note>
    </ligand>
</feature>
<feature type="binding site" evidence="1">
    <location>
        <position position="492"/>
    </location>
    <ligand>
        <name>Zn(2+)</name>
        <dbReference type="ChEBI" id="CHEBI:29105"/>
        <note>catalytic</note>
    </ligand>
</feature>
<proteinExistence type="inferred from homology"/>
<comment type="function">
    <text evidence="1">Acts as a processive, ATP-dependent zinc metallopeptidase for both cytoplasmic and membrane proteins. Plays a role in the quality control of integral membrane proteins.</text>
</comment>
<comment type="cofactor">
    <cofactor evidence="1">
        <name>Zn(2+)</name>
        <dbReference type="ChEBI" id="CHEBI:29105"/>
    </cofactor>
    <text evidence="1">Binds 1 zinc ion per subunit.</text>
</comment>
<comment type="subunit">
    <text evidence="1">Homohexamer.</text>
</comment>
<comment type="subcellular location">
    <subcellularLocation>
        <location evidence="1">Cell membrane</location>
        <topology evidence="1">Multi-pass membrane protein</topology>
        <orientation evidence="1">Cytoplasmic side</orientation>
    </subcellularLocation>
</comment>
<comment type="similarity">
    <text evidence="1">In the central section; belongs to the AAA ATPase family.</text>
</comment>
<comment type="similarity">
    <text evidence="1">In the C-terminal section; belongs to the peptidase M41 family.</text>
</comment>
<sequence length="610" mass="68020">MAKNLMLWLVIAVVLMSIFQNFSANNINNRKIDYSTFLSDVNQDQVREVHISGREMNIIRKDNGRYITYIPISDPKLLDNLLVKNVKIIGAAPEEQSFFTAIFISWFPMLLLIGVWVFFMRQMQVGGGKGAMSFGKSKARMLPEDQVKITFSDVAGCDEAKEEVQELVEYLKEPSRFQKLGGKIPKGILMVGPPGTGKTLLAKAIAGEAKVPFFTISGSDFVEMFVGVGASRVRDMFEHSRKVAPCIIFIDEIDAVGRQRGAGLGGGHDEREQTLNQMLVEMDGFDGNEGIILIAATNRPDVLDPALLRPGRFDRQIFVALPDIRGREKIIQVHMKKVPLGNNVDPMIIARGTPGFSGADLANLVNEAALFAARNNRDVVMMSDFESAKDKITMGSERRSMVMTEKQKESTAYHEAGHVIVGRLVPEHDPAHKVTIIPRGRALGVTFFLPKDDVLSINKNKLESQISTLYGGRLAEEIIYGVNNVSTGAHNDIKVATNLARNMVTQWGFSKKLGPLLYSEEEGEIFLGRTVTKSKHMSDETARIIDEEVKLLVEKNYNRAKKILEENLDILHAMKDALIKYETINSRQIDDLMKRKSIQSSNICTDDDNN</sequence>